<proteinExistence type="inferred from homology"/>
<gene>
    <name type="primary">hisF</name>
    <name type="ordered locus">NMA0838</name>
</gene>
<sequence length="255" mass="27010">MALAKRIIPCLDVKDGRVVKGVNFIGLRDAGDPVEAAKRYNGEGADELTFLDITASSDNRDTILHIIEEVAGQVFIPLTVGGGVRTVADIRRLLNAGADKVSINTAAVTRPDLIDEAAGFFGSQAIVAAVDAKAVNPENTRWEIFTHGGRNPTGLDAVEWAIEMQKRGAGEILLTGMDRDGTKQGFNLPLTRAVAEAVDIPVIASGGVGNVRHLIEGITEGKADAVLAAGVFHFGEIAIREAKHAMREAGIEVRL</sequence>
<comment type="function">
    <text evidence="1">IGPS catalyzes the conversion of PRFAR and glutamine to IGP, AICAR and glutamate. The HisF subunit catalyzes the cyclization activity that produces IGP and AICAR from PRFAR using the ammonia provided by the HisH subunit (By similarity).</text>
</comment>
<comment type="catalytic activity">
    <reaction>
        <text>5-[(5-phospho-1-deoxy-D-ribulos-1-ylimino)methylamino]-1-(5-phospho-beta-D-ribosyl)imidazole-4-carboxamide + L-glutamine = D-erythro-1-(imidazol-4-yl)glycerol 3-phosphate + 5-amino-1-(5-phospho-beta-D-ribosyl)imidazole-4-carboxamide + L-glutamate + H(+)</text>
        <dbReference type="Rhea" id="RHEA:24793"/>
        <dbReference type="ChEBI" id="CHEBI:15378"/>
        <dbReference type="ChEBI" id="CHEBI:29985"/>
        <dbReference type="ChEBI" id="CHEBI:58278"/>
        <dbReference type="ChEBI" id="CHEBI:58359"/>
        <dbReference type="ChEBI" id="CHEBI:58475"/>
        <dbReference type="ChEBI" id="CHEBI:58525"/>
        <dbReference type="EC" id="4.3.2.10"/>
    </reaction>
</comment>
<comment type="pathway">
    <text>Amino-acid biosynthesis; L-histidine biosynthesis; L-histidine from 5-phospho-alpha-D-ribose 1-diphosphate: step 5/9.</text>
</comment>
<comment type="subunit">
    <text evidence="1">Heterodimer of HisH and HisF.</text>
</comment>
<comment type="subcellular location">
    <subcellularLocation>
        <location evidence="1">Cytoplasm</location>
    </subcellularLocation>
</comment>
<comment type="similarity">
    <text evidence="3">Belongs to the HisA/HisF family.</text>
</comment>
<dbReference type="EC" id="4.3.2.10"/>
<dbReference type="EMBL" id="AL157959">
    <property type="protein sequence ID" value="CAM08076.1"/>
    <property type="molecule type" value="Genomic_DNA"/>
</dbReference>
<dbReference type="PIR" id="B81929">
    <property type="entry name" value="B81929"/>
</dbReference>
<dbReference type="RefSeq" id="WP_002246862.1">
    <property type="nucleotide sequence ID" value="NC_003116.1"/>
</dbReference>
<dbReference type="SMR" id="Q9JVH5"/>
<dbReference type="EnsemblBacteria" id="CAM08076">
    <property type="protein sequence ID" value="CAM08076"/>
    <property type="gene ID" value="NMA0838"/>
</dbReference>
<dbReference type="KEGG" id="nma:NMA0838"/>
<dbReference type="HOGENOM" id="CLU_048577_4_0_4"/>
<dbReference type="UniPathway" id="UPA00031">
    <property type="reaction ID" value="UER00010"/>
</dbReference>
<dbReference type="Proteomes" id="UP000000626">
    <property type="component" value="Chromosome"/>
</dbReference>
<dbReference type="GO" id="GO:0005737">
    <property type="term" value="C:cytoplasm"/>
    <property type="evidence" value="ECO:0007669"/>
    <property type="project" value="UniProtKB-SubCell"/>
</dbReference>
<dbReference type="GO" id="GO:0000107">
    <property type="term" value="F:imidazoleglycerol-phosphate synthase activity"/>
    <property type="evidence" value="ECO:0007669"/>
    <property type="project" value="UniProtKB-UniRule"/>
</dbReference>
<dbReference type="GO" id="GO:0016829">
    <property type="term" value="F:lyase activity"/>
    <property type="evidence" value="ECO:0007669"/>
    <property type="project" value="UniProtKB-KW"/>
</dbReference>
<dbReference type="GO" id="GO:0000105">
    <property type="term" value="P:L-histidine biosynthetic process"/>
    <property type="evidence" value="ECO:0007669"/>
    <property type="project" value="UniProtKB-UniRule"/>
</dbReference>
<dbReference type="CDD" id="cd04731">
    <property type="entry name" value="HisF"/>
    <property type="match status" value="1"/>
</dbReference>
<dbReference type="FunFam" id="3.20.20.70:FF:000006">
    <property type="entry name" value="Imidazole glycerol phosphate synthase subunit HisF"/>
    <property type="match status" value="1"/>
</dbReference>
<dbReference type="Gene3D" id="3.20.20.70">
    <property type="entry name" value="Aldolase class I"/>
    <property type="match status" value="1"/>
</dbReference>
<dbReference type="HAMAP" id="MF_01013">
    <property type="entry name" value="HisF"/>
    <property type="match status" value="1"/>
</dbReference>
<dbReference type="InterPro" id="IPR013785">
    <property type="entry name" value="Aldolase_TIM"/>
</dbReference>
<dbReference type="InterPro" id="IPR006062">
    <property type="entry name" value="His_biosynth"/>
</dbReference>
<dbReference type="InterPro" id="IPR004651">
    <property type="entry name" value="HisF"/>
</dbReference>
<dbReference type="InterPro" id="IPR050064">
    <property type="entry name" value="IGPS_HisA/HisF"/>
</dbReference>
<dbReference type="InterPro" id="IPR011060">
    <property type="entry name" value="RibuloseP-bd_barrel"/>
</dbReference>
<dbReference type="NCBIfam" id="TIGR00735">
    <property type="entry name" value="hisF"/>
    <property type="match status" value="1"/>
</dbReference>
<dbReference type="PANTHER" id="PTHR21235:SF2">
    <property type="entry name" value="IMIDAZOLE GLYCEROL PHOSPHATE SYNTHASE HISHF"/>
    <property type="match status" value="1"/>
</dbReference>
<dbReference type="PANTHER" id="PTHR21235">
    <property type="entry name" value="IMIDAZOLE GLYCEROL PHOSPHATE SYNTHASE SUBUNIT HISF/H IGP SYNTHASE SUBUNIT HISF/H"/>
    <property type="match status" value="1"/>
</dbReference>
<dbReference type="Pfam" id="PF00977">
    <property type="entry name" value="His_biosynth"/>
    <property type="match status" value="1"/>
</dbReference>
<dbReference type="SUPFAM" id="SSF51366">
    <property type="entry name" value="Ribulose-phoshate binding barrel"/>
    <property type="match status" value="1"/>
</dbReference>
<feature type="chain" id="PRO_0000142187" description="Imidazole glycerol phosphate synthase subunit HisF">
    <location>
        <begin position="1"/>
        <end position="255"/>
    </location>
</feature>
<feature type="active site" evidence="2">
    <location>
        <position position="12"/>
    </location>
</feature>
<feature type="active site" evidence="2">
    <location>
        <position position="131"/>
    </location>
</feature>
<organism>
    <name type="scientific">Neisseria meningitidis serogroup A / serotype 4A (strain DSM 15465 / Z2491)</name>
    <dbReference type="NCBI Taxonomy" id="122587"/>
    <lineage>
        <taxon>Bacteria</taxon>
        <taxon>Pseudomonadati</taxon>
        <taxon>Pseudomonadota</taxon>
        <taxon>Betaproteobacteria</taxon>
        <taxon>Neisseriales</taxon>
        <taxon>Neisseriaceae</taxon>
        <taxon>Neisseria</taxon>
    </lineage>
</organism>
<reference key="1">
    <citation type="journal article" date="2000" name="Nature">
        <title>Complete DNA sequence of a serogroup A strain of Neisseria meningitidis Z2491.</title>
        <authorList>
            <person name="Parkhill J."/>
            <person name="Achtman M."/>
            <person name="James K.D."/>
            <person name="Bentley S.D."/>
            <person name="Churcher C.M."/>
            <person name="Klee S.R."/>
            <person name="Morelli G."/>
            <person name="Basham D."/>
            <person name="Brown D."/>
            <person name="Chillingworth T."/>
            <person name="Davies R.M."/>
            <person name="Davis P."/>
            <person name="Devlin K."/>
            <person name="Feltwell T."/>
            <person name="Hamlin N."/>
            <person name="Holroyd S."/>
            <person name="Jagels K."/>
            <person name="Leather S."/>
            <person name="Moule S."/>
            <person name="Mungall K.L."/>
            <person name="Quail M.A."/>
            <person name="Rajandream M.A."/>
            <person name="Rutherford K.M."/>
            <person name="Simmonds M."/>
            <person name="Skelton J."/>
            <person name="Whitehead S."/>
            <person name="Spratt B.G."/>
            <person name="Barrell B.G."/>
        </authorList>
    </citation>
    <scope>NUCLEOTIDE SEQUENCE [LARGE SCALE GENOMIC DNA]</scope>
    <source>
        <strain>DSM 15465 / Z2491</strain>
    </source>
</reference>
<protein>
    <recommendedName>
        <fullName>Imidazole glycerol phosphate synthase subunit HisF</fullName>
        <ecNumber>4.3.2.10</ecNumber>
    </recommendedName>
    <alternativeName>
        <fullName>IGP synthase cyclase subunit</fullName>
    </alternativeName>
    <alternativeName>
        <fullName>IGP synthase subunit HisF</fullName>
    </alternativeName>
    <alternativeName>
        <fullName>ImGP synthase subunit HisF</fullName>
        <shortName>IGPS subunit HisF</shortName>
    </alternativeName>
</protein>
<name>HIS6_NEIMA</name>
<accession>Q9JVH5</accession>
<accession>A1IQP2</accession>
<keyword id="KW-0028">Amino-acid biosynthesis</keyword>
<keyword id="KW-0963">Cytoplasm</keyword>
<keyword id="KW-0368">Histidine biosynthesis</keyword>
<keyword id="KW-0456">Lyase</keyword>
<evidence type="ECO:0000250" key="1"/>
<evidence type="ECO:0000255" key="2"/>
<evidence type="ECO:0000305" key="3"/>